<keyword id="KW-0002">3D-structure</keyword>
<keyword id="KW-0037">Angiogenesis</keyword>
<keyword id="KW-0165">Cleavage on pair of basic residues</keyword>
<keyword id="KW-0202">Cytokine</keyword>
<keyword id="KW-0225">Disease variant</keyword>
<keyword id="KW-1015">Disulfide bond</keyword>
<keyword id="KW-0325">Glycoprotein</keyword>
<keyword id="KW-0339">Growth factor</keyword>
<keyword id="KW-1267">Proteomics identification</keyword>
<keyword id="KW-1185">Reference proteome</keyword>
<keyword id="KW-0964">Secreted</keyword>
<keyword id="KW-0732">Signal</keyword>
<dbReference type="EMBL" id="AF188285">
    <property type="protein sequence ID" value="AAD56960.1"/>
    <property type="molecule type" value="mRNA"/>
</dbReference>
<dbReference type="EMBL" id="AL731561">
    <property type="status" value="NOT_ANNOTATED_CDS"/>
    <property type="molecule type" value="Genomic_DNA"/>
</dbReference>
<dbReference type="EMBL" id="CH471251">
    <property type="protein sequence ID" value="EAW50660.1"/>
    <property type="molecule type" value="Genomic_DNA"/>
</dbReference>
<dbReference type="EMBL" id="BC069643">
    <property type="protein sequence ID" value="AAH69643.1"/>
    <property type="molecule type" value="mRNA"/>
</dbReference>
<dbReference type="EMBL" id="BC074921">
    <property type="protein sequence ID" value="AAH74921.1"/>
    <property type="molecule type" value="mRNA"/>
</dbReference>
<dbReference type="EMBL" id="AF156891">
    <property type="protein sequence ID" value="AAD40309.1"/>
    <property type="molecule type" value="mRNA"/>
</dbReference>
<dbReference type="CCDS" id="CCDS73118.1"/>
<dbReference type="RefSeq" id="NP_057288.1">
    <property type="nucleotide sequence ID" value="NM_016204.4"/>
</dbReference>
<dbReference type="PDB" id="1ZKZ">
    <property type="method" value="X-ray"/>
    <property type="resolution" value="2.33 A"/>
    <property type="chains" value="A=320-429"/>
</dbReference>
<dbReference type="PDB" id="4FAO">
    <property type="method" value="X-ray"/>
    <property type="resolution" value="3.36 A"/>
    <property type="chains" value="A/B/G/H/M/N/S/T/a/b/g/h=320-429"/>
</dbReference>
<dbReference type="PDB" id="4MPL">
    <property type="method" value="X-ray"/>
    <property type="resolution" value="1.90 A"/>
    <property type="chains" value="A=321-429"/>
</dbReference>
<dbReference type="PDB" id="4YCG">
    <property type="method" value="X-ray"/>
    <property type="resolution" value="3.30 A"/>
    <property type="chains" value="C/D=320-429"/>
</dbReference>
<dbReference type="PDB" id="4YCI">
    <property type="method" value="X-ray"/>
    <property type="resolution" value="3.25 A"/>
    <property type="chains" value="C/D=320-429"/>
</dbReference>
<dbReference type="PDB" id="5HZW">
    <property type="method" value="X-ray"/>
    <property type="resolution" value="4.45 A"/>
    <property type="chains" value="B=320-429"/>
</dbReference>
<dbReference type="PDB" id="5I05">
    <property type="method" value="X-ray"/>
    <property type="resolution" value="1.87 A"/>
    <property type="chains" value="A=320-429"/>
</dbReference>
<dbReference type="PDB" id="9DPM">
    <property type="method" value="X-ray"/>
    <property type="resolution" value="1.90 A"/>
    <property type="chains" value="A=320-429"/>
</dbReference>
<dbReference type="PDB" id="9DPN">
    <property type="method" value="X-ray"/>
    <property type="resolution" value="2.24 A"/>
    <property type="chains" value="A=320-429"/>
</dbReference>
<dbReference type="PDB" id="9DPO">
    <property type="method" value="X-ray"/>
    <property type="resolution" value="2.34 A"/>
    <property type="chains" value="A=320-429"/>
</dbReference>
<dbReference type="PDB" id="9DPP">
    <property type="method" value="X-ray"/>
    <property type="resolution" value="2.12 A"/>
    <property type="chains" value="A=320-429"/>
</dbReference>
<dbReference type="PDB" id="9DPQ">
    <property type="method" value="X-ray"/>
    <property type="resolution" value="2.35 A"/>
    <property type="chains" value="A=320-429"/>
</dbReference>
<dbReference type="PDB" id="9DPR">
    <property type="method" value="X-ray"/>
    <property type="resolution" value="2.61 A"/>
    <property type="chains" value="A=320-429"/>
</dbReference>
<dbReference type="PDB" id="9DPS">
    <property type="method" value="X-ray"/>
    <property type="resolution" value="2.06 A"/>
    <property type="chains" value="A=320-429"/>
</dbReference>
<dbReference type="PDB" id="9DPT">
    <property type="method" value="X-ray"/>
    <property type="resolution" value="2.49 A"/>
    <property type="chains" value="A=320-429"/>
</dbReference>
<dbReference type="PDB" id="9DPU">
    <property type="method" value="X-ray"/>
    <property type="resolution" value="2.10 A"/>
    <property type="chains" value="A=320-429"/>
</dbReference>
<dbReference type="PDB" id="9DPV">
    <property type="method" value="X-ray"/>
    <property type="resolution" value="1.99 A"/>
    <property type="chains" value="A=320-429"/>
</dbReference>
<dbReference type="PDB" id="9DPW">
    <property type="method" value="X-ray"/>
    <property type="resolution" value="2.71 A"/>
    <property type="chains" value="A=320-429"/>
</dbReference>
<dbReference type="PDB" id="9DPX">
    <property type="method" value="X-ray"/>
    <property type="resolution" value="2.10 A"/>
    <property type="chains" value="A=320-429"/>
</dbReference>
<dbReference type="PDBsum" id="1ZKZ"/>
<dbReference type="PDBsum" id="4FAO"/>
<dbReference type="PDBsum" id="4MPL"/>
<dbReference type="PDBsum" id="4YCG"/>
<dbReference type="PDBsum" id="4YCI"/>
<dbReference type="PDBsum" id="5HZW"/>
<dbReference type="PDBsum" id="5I05"/>
<dbReference type="PDBsum" id="9DPM"/>
<dbReference type="PDBsum" id="9DPN"/>
<dbReference type="PDBsum" id="9DPO"/>
<dbReference type="PDBsum" id="9DPP"/>
<dbReference type="PDBsum" id="9DPQ"/>
<dbReference type="PDBsum" id="9DPR"/>
<dbReference type="PDBsum" id="9DPS"/>
<dbReference type="PDBsum" id="9DPT"/>
<dbReference type="PDBsum" id="9DPU"/>
<dbReference type="PDBsum" id="9DPV"/>
<dbReference type="PDBsum" id="9DPW"/>
<dbReference type="PDBsum" id="9DPX"/>
<dbReference type="SMR" id="Q9UK05"/>
<dbReference type="BioGRID" id="108928">
    <property type="interactions" value="6"/>
</dbReference>
<dbReference type="FunCoup" id="Q9UK05">
    <property type="interactions" value="320"/>
</dbReference>
<dbReference type="IntAct" id="Q9UK05">
    <property type="interactions" value="2"/>
</dbReference>
<dbReference type="STRING" id="9606.ENSP00000463051"/>
<dbReference type="ChEMBL" id="CHEMBL3831181"/>
<dbReference type="GlyCosmos" id="Q9UK05">
    <property type="glycosylation" value="2 sites, No reported glycans"/>
</dbReference>
<dbReference type="GlyGen" id="Q9UK05">
    <property type="glycosylation" value="2 sites, 1 N-linked glycan (1 site)"/>
</dbReference>
<dbReference type="iPTMnet" id="Q9UK05"/>
<dbReference type="PhosphoSitePlus" id="Q9UK05"/>
<dbReference type="BioMuta" id="GDF2"/>
<dbReference type="DMDM" id="13124266"/>
<dbReference type="MassIVE" id="Q9UK05"/>
<dbReference type="PaxDb" id="9606-ENSP00000463051"/>
<dbReference type="PeptideAtlas" id="Q9UK05"/>
<dbReference type="ProteomicsDB" id="84699"/>
<dbReference type="Antibodypedia" id="72423">
    <property type="antibodies" value="398 antibodies from 35 providers"/>
</dbReference>
<dbReference type="DNASU" id="2658"/>
<dbReference type="Ensembl" id="ENST00000581492.3">
    <property type="protein sequence ID" value="ENSP00000463051.1"/>
    <property type="gene ID" value="ENSG00000263761.3"/>
</dbReference>
<dbReference type="GeneID" id="2658"/>
<dbReference type="KEGG" id="hsa:2658"/>
<dbReference type="MANE-Select" id="ENST00000581492.3">
    <property type="protein sequence ID" value="ENSP00000463051.1"/>
    <property type="RefSeq nucleotide sequence ID" value="NM_016204.4"/>
    <property type="RefSeq protein sequence ID" value="NP_057288.1"/>
</dbReference>
<dbReference type="UCSC" id="uc001jfa.2">
    <property type="organism name" value="human"/>
</dbReference>
<dbReference type="AGR" id="HGNC:4217"/>
<dbReference type="CTD" id="2658"/>
<dbReference type="DisGeNET" id="2658"/>
<dbReference type="GeneCards" id="GDF2"/>
<dbReference type="HGNC" id="HGNC:4217">
    <property type="gene designation" value="GDF2"/>
</dbReference>
<dbReference type="HPA" id="ENSG00000263761">
    <property type="expression patterns" value="Tissue enriched (liver)"/>
</dbReference>
<dbReference type="MalaCards" id="GDF2"/>
<dbReference type="MIM" id="605120">
    <property type="type" value="gene"/>
</dbReference>
<dbReference type="MIM" id="615506">
    <property type="type" value="phenotype"/>
</dbReference>
<dbReference type="neXtProt" id="NX_Q9UK05"/>
<dbReference type="OpenTargets" id="ENSG00000263761"/>
<dbReference type="Orphanet" id="774">
    <property type="disease" value="Hereditary hemorrhagic telangiectasia"/>
</dbReference>
<dbReference type="Orphanet" id="275777">
    <property type="disease" value="Heritable pulmonary arterial hypertension"/>
</dbReference>
<dbReference type="PharmGKB" id="PA28632"/>
<dbReference type="VEuPathDB" id="HostDB:ENSG00000263761"/>
<dbReference type="eggNOG" id="KOG3900">
    <property type="taxonomic scope" value="Eukaryota"/>
</dbReference>
<dbReference type="GeneTree" id="ENSGT00940000159802"/>
<dbReference type="HOGENOM" id="CLU_020515_2_0_1"/>
<dbReference type="InParanoid" id="Q9UK05"/>
<dbReference type="OMA" id="GTFDLRM"/>
<dbReference type="OrthoDB" id="5987191at2759"/>
<dbReference type="PAN-GO" id="Q9UK05">
    <property type="GO annotations" value="4 GO annotations based on evolutionary models"/>
</dbReference>
<dbReference type="PhylomeDB" id="Q9UK05"/>
<dbReference type="TreeFam" id="TF316134"/>
<dbReference type="PathwayCommons" id="Q9UK05"/>
<dbReference type="Reactome" id="R-HSA-201451">
    <property type="pathway name" value="Signaling by BMP"/>
</dbReference>
<dbReference type="SignaLink" id="Q9UK05"/>
<dbReference type="SIGNOR" id="Q9UK05"/>
<dbReference type="BioGRID-ORCS" id="2658">
    <property type="hits" value="16 hits in 1132 CRISPR screens"/>
</dbReference>
<dbReference type="EvolutionaryTrace" id="Q9UK05"/>
<dbReference type="GeneWiki" id="GDF2"/>
<dbReference type="GenomeRNAi" id="2658"/>
<dbReference type="Pharos" id="Q9UK05">
    <property type="development level" value="Tbio"/>
</dbReference>
<dbReference type="PRO" id="PR:Q9UK05"/>
<dbReference type="Proteomes" id="UP000005640">
    <property type="component" value="Chromosome 10"/>
</dbReference>
<dbReference type="RNAct" id="Q9UK05">
    <property type="molecule type" value="protein"/>
</dbReference>
<dbReference type="Bgee" id="ENSG00000263761">
    <property type="expression patterns" value="Expressed in male germ line stem cell (sensu Vertebrata) in testis and 14 other cell types or tissues"/>
</dbReference>
<dbReference type="GO" id="GO:0070062">
    <property type="term" value="C:extracellular exosome"/>
    <property type="evidence" value="ECO:0007005"/>
    <property type="project" value="UniProtKB"/>
</dbReference>
<dbReference type="GO" id="GO:0005576">
    <property type="term" value="C:extracellular region"/>
    <property type="evidence" value="ECO:0000304"/>
    <property type="project" value="Reactome"/>
</dbReference>
<dbReference type="GO" id="GO:0005615">
    <property type="term" value="C:extracellular space"/>
    <property type="evidence" value="ECO:0000314"/>
    <property type="project" value="UniProt"/>
</dbReference>
<dbReference type="GO" id="GO:0005125">
    <property type="term" value="F:cytokine activity"/>
    <property type="evidence" value="ECO:0000316"/>
    <property type="project" value="BHF-UCL"/>
</dbReference>
<dbReference type="GO" id="GO:0008083">
    <property type="term" value="F:growth factor activity"/>
    <property type="evidence" value="ECO:0000314"/>
    <property type="project" value="BHF-UCL"/>
</dbReference>
<dbReference type="GO" id="GO:0043539">
    <property type="term" value="F:protein serine/threonine kinase activator activity"/>
    <property type="evidence" value="ECO:0000314"/>
    <property type="project" value="UniProt"/>
</dbReference>
<dbReference type="GO" id="GO:0032924">
    <property type="term" value="P:activin receptor signaling pathway"/>
    <property type="evidence" value="ECO:0000314"/>
    <property type="project" value="BHF-UCL"/>
</dbReference>
<dbReference type="GO" id="GO:0001525">
    <property type="term" value="P:angiogenesis"/>
    <property type="evidence" value="ECO:0000315"/>
    <property type="project" value="UniProtKB"/>
</dbReference>
<dbReference type="GO" id="GO:0048514">
    <property type="term" value="P:blood vessel morphogenesis"/>
    <property type="evidence" value="ECO:0000314"/>
    <property type="project" value="DFLAT"/>
</dbReference>
<dbReference type="GO" id="GO:0030509">
    <property type="term" value="P:BMP signaling pathway"/>
    <property type="evidence" value="ECO:0000314"/>
    <property type="project" value="BHF-UCL"/>
</dbReference>
<dbReference type="GO" id="GO:0001569">
    <property type="term" value="P:branching involved in blood vessel morphogenesis"/>
    <property type="evidence" value="ECO:0000314"/>
    <property type="project" value="DFLAT"/>
</dbReference>
<dbReference type="GO" id="GO:0051216">
    <property type="term" value="P:cartilage development"/>
    <property type="evidence" value="ECO:0000304"/>
    <property type="project" value="DFLAT"/>
</dbReference>
<dbReference type="GO" id="GO:0071773">
    <property type="term" value="P:cellular response to BMP stimulus"/>
    <property type="evidence" value="ECO:0000314"/>
    <property type="project" value="BHF-UCL"/>
</dbReference>
<dbReference type="GO" id="GO:0006879">
    <property type="term" value="P:intracellular iron ion homeostasis"/>
    <property type="evidence" value="ECO:0000304"/>
    <property type="project" value="DFLAT"/>
</dbReference>
<dbReference type="GO" id="GO:0016525">
    <property type="term" value="P:negative regulation of angiogenesis"/>
    <property type="evidence" value="ECO:0000304"/>
    <property type="project" value="DFLAT"/>
</dbReference>
<dbReference type="GO" id="GO:0043537">
    <property type="term" value="P:negative regulation of blood vessel endothelial cell migration"/>
    <property type="evidence" value="ECO:0000304"/>
    <property type="project" value="DFLAT"/>
</dbReference>
<dbReference type="GO" id="GO:0030308">
    <property type="term" value="P:negative regulation of cell growth"/>
    <property type="evidence" value="ECO:0000314"/>
    <property type="project" value="BHF-UCL"/>
</dbReference>
<dbReference type="GO" id="GO:0008156">
    <property type="term" value="P:negative regulation of DNA replication"/>
    <property type="evidence" value="ECO:0000304"/>
    <property type="project" value="DFLAT"/>
</dbReference>
<dbReference type="GO" id="GO:0010596">
    <property type="term" value="P:negative regulation of endothelial cell migration"/>
    <property type="evidence" value="ECO:0000314"/>
    <property type="project" value="BHF-UCL"/>
</dbReference>
<dbReference type="GO" id="GO:0001937">
    <property type="term" value="P:negative regulation of endothelial cell proliferation"/>
    <property type="evidence" value="ECO:0000314"/>
    <property type="project" value="DFLAT"/>
</dbReference>
<dbReference type="GO" id="GO:0001503">
    <property type="term" value="P:ossification"/>
    <property type="evidence" value="ECO:0000304"/>
    <property type="project" value="DFLAT"/>
</dbReference>
<dbReference type="GO" id="GO:0001649">
    <property type="term" value="P:osteoblast differentiation"/>
    <property type="evidence" value="ECO:0007669"/>
    <property type="project" value="Ensembl"/>
</dbReference>
<dbReference type="GO" id="GO:0045766">
    <property type="term" value="P:positive regulation of angiogenesis"/>
    <property type="evidence" value="ECO:0000314"/>
    <property type="project" value="DFLAT"/>
</dbReference>
<dbReference type="GO" id="GO:1903348">
    <property type="term" value="P:positive regulation of bicellular tight junction assembly"/>
    <property type="evidence" value="ECO:0000314"/>
    <property type="project" value="BHF-UCL"/>
</dbReference>
<dbReference type="GO" id="GO:0030513">
    <property type="term" value="P:positive regulation of BMP signaling pathway"/>
    <property type="evidence" value="ECO:0007669"/>
    <property type="project" value="Ensembl"/>
</dbReference>
<dbReference type="GO" id="GO:0061036">
    <property type="term" value="P:positive regulation of cartilage development"/>
    <property type="evidence" value="ECO:0007669"/>
    <property type="project" value="Ensembl"/>
</dbReference>
<dbReference type="GO" id="GO:0045893">
    <property type="term" value="P:positive regulation of DNA-templated transcription"/>
    <property type="evidence" value="ECO:0000314"/>
    <property type="project" value="BHF-UCL"/>
</dbReference>
<dbReference type="GO" id="GO:0045603">
    <property type="term" value="P:positive regulation of endothelial cell differentiation"/>
    <property type="evidence" value="ECO:0007669"/>
    <property type="project" value="Ensembl"/>
</dbReference>
<dbReference type="GO" id="GO:0001938">
    <property type="term" value="P:positive regulation of endothelial cell proliferation"/>
    <property type="evidence" value="ECO:0000314"/>
    <property type="project" value="DFLAT"/>
</dbReference>
<dbReference type="GO" id="GO:0030858">
    <property type="term" value="P:positive regulation of epithelial cell differentiation"/>
    <property type="evidence" value="ECO:0000314"/>
    <property type="project" value="BHF-UCL"/>
</dbReference>
<dbReference type="GO" id="GO:0032757">
    <property type="term" value="P:positive regulation of interleukin-8 production"/>
    <property type="evidence" value="ECO:0000314"/>
    <property type="project" value="BHF-UCL"/>
</dbReference>
<dbReference type="GO" id="GO:0045747">
    <property type="term" value="P:positive regulation of Notch signaling pathway"/>
    <property type="evidence" value="ECO:0000314"/>
    <property type="project" value="BHF-UCL"/>
</dbReference>
<dbReference type="GO" id="GO:0060391">
    <property type="term" value="P:positive regulation of SMAD protein signal transduction"/>
    <property type="evidence" value="ECO:0000314"/>
    <property type="project" value="BHF-UCL"/>
</dbReference>
<dbReference type="GO" id="GO:0045944">
    <property type="term" value="P:positive regulation of transcription by RNA polymerase II"/>
    <property type="evidence" value="ECO:0000314"/>
    <property type="project" value="BHF-UCL"/>
</dbReference>
<dbReference type="GO" id="GO:0006366">
    <property type="term" value="P:transcription by RNA polymerase II"/>
    <property type="evidence" value="ECO:0007669"/>
    <property type="project" value="Ensembl"/>
</dbReference>
<dbReference type="GO" id="GO:0001570">
    <property type="term" value="P:vasculogenesis"/>
    <property type="evidence" value="ECO:0007669"/>
    <property type="project" value="Ensembl"/>
</dbReference>
<dbReference type="CDD" id="cd19400">
    <property type="entry name" value="TGF_beta_BMP9"/>
    <property type="match status" value="1"/>
</dbReference>
<dbReference type="FunFam" id="2.10.90.10:FF:000001">
    <property type="entry name" value="Bone morphogenetic protein 4"/>
    <property type="match status" value="1"/>
</dbReference>
<dbReference type="FunFam" id="2.60.120.970:FF:000014">
    <property type="entry name" value="growth/differentiation factor 2"/>
    <property type="match status" value="1"/>
</dbReference>
<dbReference type="Gene3D" id="2.60.120.970">
    <property type="match status" value="1"/>
</dbReference>
<dbReference type="Gene3D" id="2.10.90.10">
    <property type="entry name" value="Cystine-knot cytokines"/>
    <property type="match status" value="1"/>
</dbReference>
<dbReference type="InterPro" id="IPR029034">
    <property type="entry name" value="Cystine-knot_cytokine"/>
</dbReference>
<dbReference type="InterPro" id="IPR001839">
    <property type="entry name" value="TGF-b_C"/>
</dbReference>
<dbReference type="InterPro" id="IPR001111">
    <property type="entry name" value="TGF-b_propeptide"/>
</dbReference>
<dbReference type="InterPro" id="IPR015615">
    <property type="entry name" value="TGF-beta-rel"/>
</dbReference>
<dbReference type="InterPro" id="IPR017948">
    <property type="entry name" value="TGFb_CS"/>
</dbReference>
<dbReference type="PANTHER" id="PTHR11848:SF157">
    <property type="entry name" value="GROWTH_DIFFERENTIATION FACTOR 2"/>
    <property type="match status" value="1"/>
</dbReference>
<dbReference type="PANTHER" id="PTHR11848">
    <property type="entry name" value="TGF-BETA FAMILY"/>
    <property type="match status" value="1"/>
</dbReference>
<dbReference type="Pfam" id="PF00019">
    <property type="entry name" value="TGF_beta"/>
    <property type="match status" value="1"/>
</dbReference>
<dbReference type="Pfam" id="PF00688">
    <property type="entry name" value="TGFb_propeptide"/>
    <property type="match status" value="1"/>
</dbReference>
<dbReference type="PRINTS" id="PR00669">
    <property type="entry name" value="INHIBINA"/>
</dbReference>
<dbReference type="SMART" id="SM00204">
    <property type="entry name" value="TGFB"/>
    <property type="match status" value="1"/>
</dbReference>
<dbReference type="SUPFAM" id="SSF57501">
    <property type="entry name" value="Cystine-knot cytokines"/>
    <property type="match status" value="1"/>
</dbReference>
<dbReference type="PROSITE" id="PS00250">
    <property type="entry name" value="TGF_BETA_1"/>
    <property type="match status" value="1"/>
</dbReference>
<dbReference type="PROSITE" id="PS51362">
    <property type="entry name" value="TGF_BETA_2"/>
    <property type="match status" value="1"/>
</dbReference>
<proteinExistence type="evidence at protein level"/>
<sequence>MCPGALWVALPLLSLLAGSLQGKPLQSWGRGSAGGNAHSPLGVPGGGLPEHTFNLKMFLENVKVDFLRSLNLSGVPSQDKTRVEPPQYMIDLYNRYTSDKSTTPASNIVRSFSMEDAISITATEDFPFQKHILLFNISIPRHEQITRAELRLYVSCQNHVDPSHDLKGSVVIYDVLDGTDAWDSATETKTFLVSQDIQDEGWETLEVSSAVKRWVRSDSTKSKNKLEVTVESHRKGCDTLDISVPPGSRNLPFFVVFSNDHSSGTKETRLELREMISHEQESVLKKLSKDGSTEAGESSHEEDTDGHVAAGSTLARRKRSAGAGSHCQKTSLRVNFEDIGWDSWIIAPKEYEAYECKGGCFFPLADDVTPTKHAIVQTLVHLKFPTKVGKACCVPTKLSPISVLYKDDMGVPTLKYHYEGMSVAECGCR</sequence>
<comment type="function">
    <text evidence="5 7 11 12 14">Potent circulating inhibitor of angiogenesis. Signals through the type I activin receptor ACVRL1 but not other Alks. Signaling through SMAD1 in endothelial cells requires TGF-beta coreceptor endoglin/ENG.</text>
</comment>
<comment type="subunit">
    <text evidence="4 6 7 8 9 10 11 15 16">Homodimer; disulfide-linked (PubMed:25237187, PubMed:28564608). Detected in extracellular fluid as mature homodimer, and in complex with its propeptide (PubMed:21710321, PubMed:25237187). Interacts with ACVRL1, BMPR2 and ACVR2B with high affinity (in vitro) (PubMed:22347366, PubMed:22799562, PubMed:25237187, PubMed:25751889). Identified in a complex with ACVRL1 and ACVR2B (PubMed:22718755). Has ten times lower affinity for ACVR2A (in vitro) (PubMed:25751889). Interacts with ENG, forming a heterotetramer with a 2:2 stoichiometry (PubMed:21737454, PubMed:28564608). Can form a heteromeric complex with ENG and ACVRL1 (PubMed:28564608). Interacts with type I receptor ACVR1 (PubMed:20628059).</text>
</comment>
<comment type="interaction">
    <interactant intactId="EBI-16227344">
        <id>PRO_0000033903</id>
    </interactant>
    <interactant intactId="EBI-8043559">
        <id>P37023</id>
        <label>ACVRL1</label>
    </interactant>
    <organismsDiffer>false</organismsDiffer>
    <experiments>2</experiments>
</comment>
<comment type="interaction">
    <interactant intactId="EBI-16227344">
        <id>PRO_0000033903</id>
    </interactant>
    <interactant intactId="EBI-2834630">
        <id>P17813</id>
        <label>ENG</label>
    </interactant>
    <organismsDiffer>false</organismsDiffer>
    <experiments>10</experiments>
</comment>
<comment type="subcellular location">
    <subcellularLocation>
        <location evidence="5 7 14">Secreted</location>
    </subcellularLocation>
</comment>
<comment type="tissue specificity">
    <text evidence="7">Detected in blood plasma (at protein level).</text>
</comment>
<comment type="PTM">
    <text evidence="14">A reversible disulfide bond can be formed between the two subunits in the homodimer; this has no effect on GDF2 activity.</text>
</comment>
<comment type="disease" evidence="13">
    <disease id="DI-03967">
        <name>Telangiectasia, hereditary hemorrhagic, 5</name>
        <acronym>HHT5</acronym>
        <description>A multisystemic vascular dysplasia leading to dilation of permanent blood vessels and arteriovenous malformations of skin, mucosa, and viscera. The disease is characterized by recurrent epistaxis and gastro-intestinal hemorrhage. Visceral involvement includes arteriovenous malformations of the lung, liver, and brain.</description>
        <dbReference type="MIM" id="615506"/>
    </disease>
    <text>The disease is caused by variants affecting the gene represented in this entry.</text>
</comment>
<comment type="similarity">
    <text evidence="17">Belongs to the TGF-beta family.</text>
</comment>
<comment type="caution">
    <text evidence="14 15 17">Can promote osteogenic differentiation in vitro (PubMed:25237187, PubMed:25751889). This is probably not physiologically relevant.</text>
</comment>
<comment type="online information" name="Wikipedia">
    <link uri="https://en.wikipedia.org/wiki/GDF2"/>
    <text>GDF2 entry</text>
</comment>
<protein>
    <recommendedName>
        <fullName>Growth/differentiation factor 2</fullName>
        <shortName>GDF-2</shortName>
    </recommendedName>
    <alternativeName>
        <fullName>Bone morphogenetic protein 9</fullName>
        <shortName>BMP-9</shortName>
    </alternativeName>
</protein>
<organism>
    <name type="scientific">Homo sapiens</name>
    <name type="common">Human</name>
    <dbReference type="NCBI Taxonomy" id="9606"/>
    <lineage>
        <taxon>Eukaryota</taxon>
        <taxon>Metazoa</taxon>
        <taxon>Chordata</taxon>
        <taxon>Craniata</taxon>
        <taxon>Vertebrata</taxon>
        <taxon>Euteleostomi</taxon>
        <taxon>Mammalia</taxon>
        <taxon>Eutheria</taxon>
        <taxon>Euarchontoglires</taxon>
        <taxon>Primates</taxon>
        <taxon>Haplorrhini</taxon>
        <taxon>Catarrhini</taxon>
        <taxon>Hominidae</taxon>
        <taxon>Homo</taxon>
    </lineage>
</organism>
<name>GDF2_HUMAN</name>
<reference key="1">
    <citation type="submission" date="1999-09" db="EMBL/GenBank/DDBJ databases">
        <authorList>
            <person name="Celeste A.J."/>
        </authorList>
    </citation>
    <scope>NUCLEOTIDE SEQUENCE [MRNA]</scope>
    <source>
        <tissue>Liver</tissue>
    </source>
</reference>
<reference key="2">
    <citation type="journal article" date="2004" name="Nature">
        <title>The DNA sequence and comparative analysis of human chromosome 10.</title>
        <authorList>
            <person name="Deloukas P."/>
            <person name="Earthrowl M.E."/>
            <person name="Grafham D.V."/>
            <person name="Rubenfield M."/>
            <person name="French L."/>
            <person name="Steward C.A."/>
            <person name="Sims S.K."/>
            <person name="Jones M.C."/>
            <person name="Searle S."/>
            <person name="Scott C."/>
            <person name="Howe K."/>
            <person name="Hunt S.E."/>
            <person name="Andrews T.D."/>
            <person name="Gilbert J.G.R."/>
            <person name="Swarbreck D."/>
            <person name="Ashurst J.L."/>
            <person name="Taylor A."/>
            <person name="Battles J."/>
            <person name="Bird C.P."/>
            <person name="Ainscough R."/>
            <person name="Almeida J.P."/>
            <person name="Ashwell R.I.S."/>
            <person name="Ambrose K.D."/>
            <person name="Babbage A.K."/>
            <person name="Bagguley C.L."/>
            <person name="Bailey J."/>
            <person name="Banerjee R."/>
            <person name="Bates K."/>
            <person name="Beasley H."/>
            <person name="Bray-Allen S."/>
            <person name="Brown A.J."/>
            <person name="Brown J.Y."/>
            <person name="Burford D.C."/>
            <person name="Burrill W."/>
            <person name="Burton J."/>
            <person name="Cahill P."/>
            <person name="Camire D."/>
            <person name="Carter N.P."/>
            <person name="Chapman J.C."/>
            <person name="Clark S.Y."/>
            <person name="Clarke G."/>
            <person name="Clee C.M."/>
            <person name="Clegg S."/>
            <person name="Corby N."/>
            <person name="Coulson A."/>
            <person name="Dhami P."/>
            <person name="Dutta I."/>
            <person name="Dunn M."/>
            <person name="Faulkner L."/>
            <person name="Frankish A."/>
            <person name="Frankland J.A."/>
            <person name="Garner P."/>
            <person name="Garnett J."/>
            <person name="Gribble S."/>
            <person name="Griffiths C."/>
            <person name="Grocock R."/>
            <person name="Gustafson E."/>
            <person name="Hammond S."/>
            <person name="Harley J.L."/>
            <person name="Hart E."/>
            <person name="Heath P.D."/>
            <person name="Ho T.P."/>
            <person name="Hopkins B."/>
            <person name="Horne J."/>
            <person name="Howden P.J."/>
            <person name="Huckle E."/>
            <person name="Hynds C."/>
            <person name="Johnson C."/>
            <person name="Johnson D."/>
            <person name="Kana A."/>
            <person name="Kay M."/>
            <person name="Kimberley A.M."/>
            <person name="Kershaw J.K."/>
            <person name="Kokkinaki M."/>
            <person name="Laird G.K."/>
            <person name="Lawlor S."/>
            <person name="Lee H.M."/>
            <person name="Leongamornlert D.A."/>
            <person name="Laird G."/>
            <person name="Lloyd C."/>
            <person name="Lloyd D.M."/>
            <person name="Loveland J."/>
            <person name="Lovell J."/>
            <person name="McLaren S."/>
            <person name="McLay K.E."/>
            <person name="McMurray A."/>
            <person name="Mashreghi-Mohammadi M."/>
            <person name="Matthews L."/>
            <person name="Milne S."/>
            <person name="Nickerson T."/>
            <person name="Nguyen M."/>
            <person name="Overton-Larty E."/>
            <person name="Palmer S.A."/>
            <person name="Pearce A.V."/>
            <person name="Peck A.I."/>
            <person name="Pelan S."/>
            <person name="Phillimore B."/>
            <person name="Porter K."/>
            <person name="Rice C.M."/>
            <person name="Rogosin A."/>
            <person name="Ross M.T."/>
            <person name="Sarafidou T."/>
            <person name="Sehra H.K."/>
            <person name="Shownkeen R."/>
            <person name="Skuce C.D."/>
            <person name="Smith M."/>
            <person name="Standring L."/>
            <person name="Sycamore N."/>
            <person name="Tester J."/>
            <person name="Thorpe A."/>
            <person name="Torcasso W."/>
            <person name="Tracey A."/>
            <person name="Tromans A."/>
            <person name="Tsolas J."/>
            <person name="Wall M."/>
            <person name="Walsh J."/>
            <person name="Wang H."/>
            <person name="Weinstock K."/>
            <person name="West A.P."/>
            <person name="Willey D.L."/>
            <person name="Whitehead S.L."/>
            <person name="Wilming L."/>
            <person name="Wray P.W."/>
            <person name="Young L."/>
            <person name="Chen Y."/>
            <person name="Lovering R.C."/>
            <person name="Moschonas N.K."/>
            <person name="Siebert R."/>
            <person name="Fechtel K."/>
            <person name="Bentley D."/>
            <person name="Durbin R.M."/>
            <person name="Hubbard T."/>
            <person name="Doucette-Stamm L."/>
            <person name="Beck S."/>
            <person name="Smith D.R."/>
            <person name="Rogers J."/>
        </authorList>
    </citation>
    <scope>NUCLEOTIDE SEQUENCE [LARGE SCALE GENOMIC DNA]</scope>
</reference>
<reference key="3">
    <citation type="submission" date="2005-07" db="EMBL/GenBank/DDBJ databases">
        <authorList>
            <person name="Mural R.J."/>
            <person name="Istrail S."/>
            <person name="Sutton G.G."/>
            <person name="Florea L."/>
            <person name="Halpern A.L."/>
            <person name="Mobarry C.M."/>
            <person name="Lippert R."/>
            <person name="Walenz B."/>
            <person name="Shatkay H."/>
            <person name="Dew I."/>
            <person name="Miller J.R."/>
            <person name="Flanigan M.J."/>
            <person name="Edwards N.J."/>
            <person name="Bolanos R."/>
            <person name="Fasulo D."/>
            <person name="Halldorsson B.V."/>
            <person name="Hannenhalli S."/>
            <person name="Turner R."/>
            <person name="Yooseph S."/>
            <person name="Lu F."/>
            <person name="Nusskern D.R."/>
            <person name="Shue B.C."/>
            <person name="Zheng X.H."/>
            <person name="Zhong F."/>
            <person name="Delcher A.L."/>
            <person name="Huson D.H."/>
            <person name="Kravitz S.A."/>
            <person name="Mouchard L."/>
            <person name="Reinert K."/>
            <person name="Remington K.A."/>
            <person name="Clark A.G."/>
            <person name="Waterman M.S."/>
            <person name="Eichler E.E."/>
            <person name="Adams M.D."/>
            <person name="Hunkapiller M.W."/>
            <person name="Myers E.W."/>
            <person name="Venter J.C."/>
        </authorList>
    </citation>
    <scope>NUCLEOTIDE SEQUENCE [LARGE SCALE GENOMIC DNA]</scope>
</reference>
<reference key="4">
    <citation type="journal article" date="2004" name="Genome Res.">
        <title>The status, quality, and expansion of the NIH full-length cDNA project: the Mammalian Gene Collection (MGC).</title>
        <authorList>
            <consortium name="The MGC Project Team"/>
        </authorList>
    </citation>
    <scope>NUCLEOTIDE SEQUENCE [LARGE SCALE MRNA]</scope>
</reference>
<reference key="5">
    <citation type="submission" date="1999-06" db="EMBL/GenBank/DDBJ databases">
        <title>Growth/differentiation factor-2, a new TGF-beta family member with bone promoting activities.</title>
        <authorList>
            <person name="Zimmers T.A."/>
            <person name="Koniaris L.G."/>
            <person name="Sitzmann J.V."/>
            <person name="Lee S.-J."/>
        </authorList>
    </citation>
    <scope>NUCLEOTIDE SEQUENCE [MRNA] OF 316-429</scope>
    <source>
        <tissue>Liver</tissue>
    </source>
</reference>
<reference key="6">
    <citation type="journal article" date="2008" name="Circ. Res.">
        <title>Bone morphogenetic protein-9 is a circulating vascular quiescence factor.</title>
        <authorList>
            <person name="David L."/>
            <person name="Mallet C."/>
            <person name="Keramidas M."/>
            <person name="Lamande N."/>
            <person name="Gasc J.M."/>
            <person name="Dupuis-Girod S."/>
            <person name="Plauchu H."/>
            <person name="Feige J.J."/>
            <person name="Bailly S."/>
        </authorList>
    </citation>
    <scope>FUNCTION</scope>
    <scope>SUBCELLULAR LOCATION</scope>
</reference>
<reference key="7">
    <citation type="journal article" date="2010" name="J. Biol. Chem.">
        <title>TGFbeta/BMP type I receptors ALK1 and ALK2 are essential for BMP9-induced osteogenic signaling in mesenchymal stem cells.</title>
        <authorList>
            <person name="Luo J."/>
            <person name="Tang M."/>
            <person name="Huang J."/>
            <person name="He B.C."/>
            <person name="Gao J.L."/>
            <person name="Chen L."/>
            <person name="Zuo G.W."/>
            <person name="Zhang W."/>
            <person name="Luo Q."/>
            <person name="Shi Q."/>
            <person name="Zhang B.Q."/>
            <person name="Bi Y."/>
            <person name="Luo X."/>
            <person name="Jiang W."/>
            <person name="Su Y."/>
            <person name="Shen J."/>
            <person name="Kim S.H."/>
            <person name="Huang E."/>
            <person name="Gao Y."/>
            <person name="Zhou J.Z."/>
            <person name="Yang K."/>
            <person name="Luu H.H."/>
            <person name="Pan X."/>
            <person name="Haydon R.C."/>
            <person name="Deng Z.L."/>
            <person name="He T.C."/>
        </authorList>
    </citation>
    <scope>INTERACTION WITH ACVR1</scope>
</reference>
<reference key="8">
    <citation type="journal article" date="2011" name="J. Biol. Chem.">
        <title>Soluble endoglin specifically binds bone morphogenetic proteins 9 and 10 via its orphan domain, inhibits blood vessel formation, and suppresses tumor growth.</title>
        <authorList>
            <person name="Castonguay R."/>
            <person name="Werner E.D."/>
            <person name="Matthews R.G."/>
            <person name="Presman E."/>
            <person name="Mulivor A.W."/>
            <person name="Solban N."/>
            <person name="Sako D."/>
            <person name="Pearsall R.S."/>
            <person name="Underwood K.W."/>
            <person name="Seehra J."/>
            <person name="Kumar R."/>
            <person name="Grinberg A.V."/>
        </authorList>
    </citation>
    <scope>INTERACTION WITH ENG</scope>
</reference>
<reference key="9">
    <citation type="journal article" date="2012" name="Biochemistry">
        <title>Structure of the Alk1 extracellular domain and characterization of its bone morphogenetic protein (BMP) binding properties.</title>
        <authorList>
            <person name="Mahlawat P."/>
            <person name="Ilangovan U."/>
            <person name="Biswas T."/>
            <person name="Sun L.Z."/>
            <person name="Hinck A.P."/>
        </authorList>
    </citation>
    <scope>FUNCTION</scope>
    <scope>INTERACTION WITH ACVRL1</scope>
</reference>
<reference key="10">
    <citation type="journal article" date="2012" name="Cell. Mol. Life Sci.">
        <title>BMP9 is produced by hepatocytes and circulates mainly in an active mature form complexed to its prodomain.</title>
        <authorList>
            <person name="Bidart M."/>
            <person name="Ricard N."/>
            <person name="Levet S."/>
            <person name="Samson M."/>
            <person name="Mallet C."/>
            <person name="David L."/>
            <person name="Subileau M."/>
            <person name="Tillet E."/>
            <person name="Feige J.J."/>
            <person name="Bailly S."/>
        </authorList>
    </citation>
    <scope>FUNCTION</scope>
    <scope>SUBCELLULAR LOCATION</scope>
    <scope>SUBUNIT</scope>
    <scope>TISSUE SPECIFICITY</scope>
</reference>
<reference key="11">
    <citation type="journal article" date="2012" name="PLoS ONE">
        <title>Structural and functional insights into endoglin ligand recognition and binding.</title>
        <authorList>
            <person name="Alt A."/>
            <person name="Miguel-Romero L."/>
            <person name="Donderis J."/>
            <person name="Aristorena M."/>
            <person name="Blanco F.J."/>
            <person name="Round A."/>
            <person name="Rubio V."/>
            <person name="Bernabeu C."/>
            <person name="Marina A."/>
        </authorList>
    </citation>
    <scope>INTERACTION WITH ENG AND ACVRL1</scope>
</reference>
<reference key="12">
    <citation type="journal article" date="2012" name="PLoS ONE">
        <title>Endoglin requirement for BMP9 signaling in endothelial cells reveals new mechanism of action for selective anti-endoglin antibodies.</title>
        <authorList>
            <person name="Nolan-Stevaux O."/>
            <person name="Zhong W."/>
            <person name="Culp S."/>
            <person name="Shaffer K."/>
            <person name="Hoover J."/>
            <person name="Wickramasinghe D."/>
            <person name="Ruefli-Brasse A."/>
        </authorList>
    </citation>
    <scope>FUNCTION</scope>
</reference>
<reference key="13">
    <citation type="journal article" date="2005" name="J. Biol. Chem.">
        <title>Crystal structure of BMP-9 and functional interactions with pro-region and receptors.</title>
        <authorList>
            <person name="Brown M.A."/>
            <person name="Zhao Q."/>
            <person name="Baker K.A."/>
            <person name="Naik C."/>
            <person name="Chen C."/>
            <person name="Pukac L."/>
            <person name="Singh M."/>
            <person name="Tsareva T."/>
            <person name="Parice Y."/>
            <person name="Mahoney A."/>
            <person name="Roschke V."/>
            <person name="Sanyal I."/>
            <person name="Choe S."/>
        </authorList>
    </citation>
    <scope>X-RAY CRYSTALLOGRAPHY (2.33 ANGSTROMS) OF 320-429</scope>
    <scope>DISULFIDE BONDS</scope>
</reference>
<reference key="14">
    <citation type="journal article" date="2012" name="J. Biol. Chem.">
        <title>Specificity and structure of a high affinity activin receptor-like kinase 1 (ALK1) signaling complex.</title>
        <authorList>
            <person name="Townson S.A."/>
            <person name="Martinez-Hackert E."/>
            <person name="Greppi C."/>
            <person name="Lowden P."/>
            <person name="Sako D."/>
            <person name="Liu J."/>
            <person name="Ucran J.A."/>
            <person name="Liharska K."/>
            <person name="Underwood K.W."/>
            <person name="Seehra J."/>
            <person name="Kumar R."/>
            <person name="Grinberg A.V."/>
        </authorList>
    </citation>
    <scope>X-RAY CRYSTALLOGRAPHY (3.36 ANGSTROMS) OF 320-429 IN COMPLEX WITH ACVRL1 AND ACVR2B</scope>
    <scope>DISULFIDE BONDS</scope>
</reference>
<reference evidence="20" key="15">
    <citation type="journal article" date="2014" name="J. Biol. Chem.">
        <title>Regulation of bone morphogenetic protein 9 (BMP9) by redox-dependent proteolysis.</title>
        <authorList>
            <person name="Wei Z."/>
            <person name="Salmon R.M."/>
            <person name="Upton P.D."/>
            <person name="Morrell N.W."/>
            <person name="Li W."/>
        </authorList>
    </citation>
    <scope>X-RAY CRYSTALLOGRAPHY (1.90 ANGSTROMS) OF 321-429</scope>
    <scope>SUBUNIT</scope>
    <scope>INTERACTION WITH ACVRL1</scope>
    <scope>SUBCELLULAR LOCATION</scope>
    <scope>DISULFIDE BONDS</scope>
</reference>
<reference evidence="21 22" key="16">
    <citation type="journal article" date="2015" name="Proc. Natl. Acad. Sci. U.S.A.">
        <title>Structure of bone morphogenetic protein 9 procomplex.</title>
        <authorList>
            <person name="Mi L.Z."/>
            <person name="Brown C.T."/>
            <person name="Gao Y."/>
            <person name="Tian Y."/>
            <person name="Le V.Q."/>
            <person name="Walz T."/>
            <person name="Springer T.A."/>
        </authorList>
    </citation>
    <scope>X-RAY CRYSTALLOGRAPHY (3.25 ANGSTROMS) OF 320-429</scope>
    <scope>FUNCTION</scope>
    <scope>INTERACTION WITH ACVRL1; BMPR2; ACVR2B AND ACVR2A</scope>
    <scope>SUBUNIT</scope>
    <scope>DISULFIDE BONDS</scope>
</reference>
<reference evidence="23 24" key="17">
    <citation type="journal article" date="2017" name="Cell Rep.">
        <title>Structural Basis of the Human Endoglin-BMP9 Interaction: Insights into BMP Signaling and HHT1.</title>
        <authorList>
            <person name="Saito T."/>
            <person name="Bokhove M."/>
            <person name="Croci R."/>
            <person name="Zamora-Caballero S."/>
            <person name="Han L."/>
            <person name="Letarte M."/>
            <person name="de Sanctis D."/>
            <person name="Jovine L."/>
        </authorList>
    </citation>
    <scope>X-RAY CRYSTALLOGRAPHY (1.87 ANGSTROMS) OF 320-429</scope>
    <scope>X-RAY CRYSTALLOGRAPHY (4.45 ANGSTROMS) OF 320-429 IN COMPLEX WITH ENG</scope>
    <scope>SUBUNIT</scope>
    <scope>DISULFIDE BONDS</scope>
</reference>
<reference key="18">
    <citation type="journal article" date="2013" name="Am. J. Hum. Genet.">
        <title>BMP9 mutations cause a vascular-anomaly syndrome with phenotypic overlap with hereditary hemorrhagic telangiectasia.</title>
        <authorList>
            <person name="Wooderchak-Donahue W.L."/>
            <person name="McDonald J."/>
            <person name="O'Fallon B."/>
            <person name="Upton P.D."/>
            <person name="Li W."/>
            <person name="Roman B.L."/>
            <person name="Young S."/>
            <person name="Plant P."/>
            <person name="Fulop G.T."/>
            <person name="Langa C."/>
            <person name="Morrell N.W."/>
            <person name="Botella L.M."/>
            <person name="Bernabeu C."/>
            <person name="Stevenson D.A."/>
            <person name="Runo J.R."/>
            <person name="Bayrak-Toydemir P."/>
        </authorList>
    </citation>
    <scope>VARIANTS HHT5 LEU-68; LEU-85 AND TRP-333</scope>
    <scope>PROTEOLYTIC PROCESSING</scope>
</reference>
<gene>
    <name type="primary">GDF2</name>
    <name type="synonym">BMP9</name>
</gene>
<evidence type="ECO:0000250" key="1"/>
<evidence type="ECO:0000255" key="2"/>
<evidence type="ECO:0000256" key="3">
    <source>
        <dbReference type="SAM" id="MobiDB-lite"/>
    </source>
</evidence>
<evidence type="ECO:0000269" key="4">
    <source>
    </source>
</evidence>
<evidence type="ECO:0000269" key="5">
    <source>
    </source>
</evidence>
<evidence type="ECO:0000269" key="6">
    <source>
    </source>
</evidence>
<evidence type="ECO:0000269" key="7">
    <source>
    </source>
</evidence>
<evidence type="ECO:0000269" key="8">
    <source>
    </source>
</evidence>
<evidence type="ECO:0000269" key="9">
    <source>
    </source>
</evidence>
<evidence type="ECO:0000269" key="10">
    <source>
    </source>
</evidence>
<evidence type="ECO:0000269" key="11">
    <source>
    </source>
</evidence>
<evidence type="ECO:0000269" key="12">
    <source>
    </source>
</evidence>
<evidence type="ECO:0000269" key="13">
    <source>
    </source>
</evidence>
<evidence type="ECO:0000269" key="14">
    <source>
    </source>
</evidence>
<evidence type="ECO:0000269" key="15">
    <source>
    </source>
</evidence>
<evidence type="ECO:0000269" key="16">
    <source>
    </source>
</evidence>
<evidence type="ECO:0000305" key="17"/>
<evidence type="ECO:0007744" key="18">
    <source>
        <dbReference type="PDB" id="1ZKZ"/>
    </source>
</evidence>
<evidence type="ECO:0007744" key="19">
    <source>
        <dbReference type="PDB" id="4FAO"/>
    </source>
</evidence>
<evidence type="ECO:0007744" key="20">
    <source>
        <dbReference type="PDB" id="4MPL"/>
    </source>
</evidence>
<evidence type="ECO:0007744" key="21">
    <source>
        <dbReference type="PDB" id="4YCG"/>
    </source>
</evidence>
<evidence type="ECO:0007744" key="22">
    <source>
        <dbReference type="PDB" id="4YCI"/>
    </source>
</evidence>
<evidence type="ECO:0007744" key="23">
    <source>
        <dbReference type="PDB" id="5HZW"/>
    </source>
</evidence>
<evidence type="ECO:0007744" key="24">
    <source>
        <dbReference type="PDB" id="5I05"/>
    </source>
</evidence>
<evidence type="ECO:0007829" key="25">
    <source>
        <dbReference type="PDB" id="4MPL"/>
    </source>
</evidence>
<evidence type="ECO:0007829" key="26">
    <source>
        <dbReference type="PDB" id="5I05"/>
    </source>
</evidence>
<accession>Q9UK05</accession>
<accession>Q5VSQ9</accession>
<accession>Q9Y571</accession>
<feature type="signal peptide" evidence="2">
    <location>
        <begin position="1"/>
        <end position="22"/>
    </location>
</feature>
<feature type="propeptide" id="PRO_0000033902" evidence="1">
    <location>
        <begin position="23"/>
        <end position="319"/>
    </location>
</feature>
<feature type="chain" id="PRO_0000033903" description="Growth/differentiation factor 2">
    <location>
        <begin position="320"/>
        <end position="429"/>
    </location>
</feature>
<feature type="region of interest" description="Disordered" evidence="3">
    <location>
        <begin position="283"/>
        <end position="308"/>
    </location>
</feature>
<feature type="region of interest" description="Interaction with ENG" evidence="16">
    <location>
        <begin position="402"/>
        <end position="416"/>
    </location>
</feature>
<feature type="compositionally biased region" description="Basic and acidic residues" evidence="3">
    <location>
        <begin position="283"/>
        <end position="301"/>
    </location>
</feature>
<feature type="glycosylation site" description="N-linked (GlcNAc...) asparagine" evidence="2">
    <location>
        <position position="71"/>
    </location>
</feature>
<feature type="glycosylation site" description="N-linked (GlcNAc...) asparagine" evidence="2">
    <location>
        <position position="136"/>
    </location>
</feature>
<feature type="disulfide bond" evidence="14 18 19 20 21 22 23 24">
    <location>
        <begin position="327"/>
        <end position="393"/>
    </location>
</feature>
<feature type="disulfide bond" evidence="18 19 20 21 22 23 24">
    <location>
        <begin position="356"/>
        <end position="426"/>
    </location>
</feature>
<feature type="disulfide bond" evidence="18 19 20 21 22 23 24">
    <location>
        <begin position="360"/>
        <end position="428"/>
    </location>
</feature>
<feature type="disulfide bond" description="Interchain" evidence="14 19">
    <location>
        <position position="392"/>
    </location>
</feature>
<feature type="sequence variant" id="VAR_070689" description="In HHT5; impaired protein processing and function; dbSNP:rs200330818." evidence="13">
    <original>R</original>
    <variation>L</variation>
    <location>
        <position position="68"/>
    </location>
</feature>
<feature type="sequence variant" id="VAR_070690" description="In HHT5; impaired protein processing and function; dbSNP:rs199804679." evidence="13">
    <original>P</original>
    <variation>L</variation>
    <location>
        <position position="85"/>
    </location>
</feature>
<feature type="sequence variant" id="VAR_070691" description="In HHT5; impaired protein processing and function; dbSNP:rs35129734." evidence="13">
    <original>R</original>
    <variation>W</variation>
    <location>
        <position position="333"/>
    </location>
</feature>
<feature type="strand" evidence="26">
    <location>
        <begin position="326"/>
        <end position="330"/>
    </location>
</feature>
<feature type="strand" evidence="26">
    <location>
        <begin position="333"/>
        <end position="335"/>
    </location>
</feature>
<feature type="turn" evidence="26">
    <location>
        <begin position="336"/>
        <end position="340"/>
    </location>
</feature>
<feature type="turn" evidence="26">
    <location>
        <begin position="342"/>
        <end position="344"/>
    </location>
</feature>
<feature type="strand" evidence="26">
    <location>
        <begin position="345"/>
        <end position="347"/>
    </location>
</feature>
<feature type="strand" evidence="26">
    <location>
        <begin position="349"/>
        <end position="352"/>
    </location>
</feature>
<feature type="strand" evidence="26">
    <location>
        <begin position="355"/>
        <end position="359"/>
    </location>
</feature>
<feature type="helix" evidence="26">
    <location>
        <begin position="366"/>
        <end position="368"/>
    </location>
</feature>
<feature type="helix" evidence="26">
    <location>
        <begin position="372"/>
        <end position="383"/>
    </location>
</feature>
<feature type="turn" evidence="26">
    <location>
        <begin position="385"/>
        <end position="387"/>
    </location>
</feature>
<feature type="strand" evidence="26">
    <location>
        <begin position="393"/>
        <end position="406"/>
    </location>
</feature>
<feature type="strand" evidence="25">
    <location>
        <begin position="408"/>
        <end position="410"/>
    </location>
</feature>
<feature type="strand" evidence="26">
    <location>
        <begin position="412"/>
        <end position="428"/>
    </location>
</feature>